<gene>
    <name evidence="1" type="primary">aspS</name>
    <name type="ordered locus">SPs1812</name>
</gene>
<proteinExistence type="inferred from homology"/>
<dbReference type="EC" id="6.1.1.12" evidence="1"/>
<dbReference type="EMBL" id="BA000034">
    <property type="protein sequence ID" value="BAC64907.1"/>
    <property type="molecule type" value="Genomic_DNA"/>
</dbReference>
<dbReference type="RefSeq" id="WP_011055095.1">
    <property type="nucleotide sequence ID" value="NC_004606.1"/>
</dbReference>
<dbReference type="SMR" id="P0DG31"/>
<dbReference type="KEGG" id="sps:SPs1812"/>
<dbReference type="HOGENOM" id="CLU_014330_3_2_9"/>
<dbReference type="GO" id="GO:0005737">
    <property type="term" value="C:cytoplasm"/>
    <property type="evidence" value="ECO:0007669"/>
    <property type="project" value="UniProtKB-SubCell"/>
</dbReference>
<dbReference type="GO" id="GO:0004815">
    <property type="term" value="F:aspartate-tRNA ligase activity"/>
    <property type="evidence" value="ECO:0007669"/>
    <property type="project" value="UniProtKB-UniRule"/>
</dbReference>
<dbReference type="GO" id="GO:0005524">
    <property type="term" value="F:ATP binding"/>
    <property type="evidence" value="ECO:0007669"/>
    <property type="project" value="UniProtKB-UniRule"/>
</dbReference>
<dbReference type="GO" id="GO:0140096">
    <property type="term" value="F:catalytic activity, acting on a protein"/>
    <property type="evidence" value="ECO:0007669"/>
    <property type="project" value="UniProtKB-ARBA"/>
</dbReference>
<dbReference type="GO" id="GO:0003676">
    <property type="term" value="F:nucleic acid binding"/>
    <property type="evidence" value="ECO:0007669"/>
    <property type="project" value="InterPro"/>
</dbReference>
<dbReference type="GO" id="GO:0016740">
    <property type="term" value="F:transferase activity"/>
    <property type="evidence" value="ECO:0007669"/>
    <property type="project" value="UniProtKB-ARBA"/>
</dbReference>
<dbReference type="GO" id="GO:0006422">
    <property type="term" value="P:aspartyl-tRNA aminoacylation"/>
    <property type="evidence" value="ECO:0007669"/>
    <property type="project" value="UniProtKB-UniRule"/>
</dbReference>
<dbReference type="CDD" id="cd00777">
    <property type="entry name" value="AspRS_core"/>
    <property type="match status" value="1"/>
</dbReference>
<dbReference type="CDD" id="cd04317">
    <property type="entry name" value="EcAspRS_like_N"/>
    <property type="match status" value="1"/>
</dbReference>
<dbReference type="Gene3D" id="3.30.930.10">
    <property type="entry name" value="Bira Bifunctional Protein, Domain 2"/>
    <property type="match status" value="1"/>
</dbReference>
<dbReference type="Gene3D" id="3.30.1360.30">
    <property type="entry name" value="GAD-like domain"/>
    <property type="match status" value="1"/>
</dbReference>
<dbReference type="Gene3D" id="2.40.50.140">
    <property type="entry name" value="Nucleic acid-binding proteins"/>
    <property type="match status" value="1"/>
</dbReference>
<dbReference type="HAMAP" id="MF_00044">
    <property type="entry name" value="Asp_tRNA_synth_type1"/>
    <property type="match status" value="1"/>
</dbReference>
<dbReference type="InterPro" id="IPR004364">
    <property type="entry name" value="Aa-tRNA-synt_II"/>
</dbReference>
<dbReference type="InterPro" id="IPR006195">
    <property type="entry name" value="aa-tRNA-synth_II"/>
</dbReference>
<dbReference type="InterPro" id="IPR045864">
    <property type="entry name" value="aa-tRNA-synth_II/BPL/LPL"/>
</dbReference>
<dbReference type="InterPro" id="IPR004524">
    <property type="entry name" value="Asp-tRNA-ligase_1"/>
</dbReference>
<dbReference type="InterPro" id="IPR047089">
    <property type="entry name" value="Asp-tRNA-ligase_1_N"/>
</dbReference>
<dbReference type="InterPro" id="IPR002312">
    <property type="entry name" value="Asp/Asn-tRNA-synth_IIb"/>
</dbReference>
<dbReference type="InterPro" id="IPR047090">
    <property type="entry name" value="AspRS_core"/>
</dbReference>
<dbReference type="InterPro" id="IPR004115">
    <property type="entry name" value="GAD-like_sf"/>
</dbReference>
<dbReference type="InterPro" id="IPR029351">
    <property type="entry name" value="GAD_dom"/>
</dbReference>
<dbReference type="InterPro" id="IPR012340">
    <property type="entry name" value="NA-bd_OB-fold"/>
</dbReference>
<dbReference type="InterPro" id="IPR004365">
    <property type="entry name" value="NA-bd_OB_tRNA"/>
</dbReference>
<dbReference type="NCBIfam" id="TIGR00459">
    <property type="entry name" value="aspS_bact"/>
    <property type="match status" value="1"/>
</dbReference>
<dbReference type="NCBIfam" id="NF001750">
    <property type="entry name" value="PRK00476.1"/>
    <property type="match status" value="1"/>
</dbReference>
<dbReference type="PANTHER" id="PTHR22594:SF5">
    <property type="entry name" value="ASPARTATE--TRNA LIGASE, MITOCHONDRIAL"/>
    <property type="match status" value="1"/>
</dbReference>
<dbReference type="PANTHER" id="PTHR22594">
    <property type="entry name" value="ASPARTYL/LYSYL-TRNA SYNTHETASE"/>
    <property type="match status" value="1"/>
</dbReference>
<dbReference type="Pfam" id="PF02938">
    <property type="entry name" value="GAD"/>
    <property type="match status" value="1"/>
</dbReference>
<dbReference type="Pfam" id="PF00152">
    <property type="entry name" value="tRNA-synt_2"/>
    <property type="match status" value="1"/>
</dbReference>
<dbReference type="Pfam" id="PF01336">
    <property type="entry name" value="tRNA_anti-codon"/>
    <property type="match status" value="1"/>
</dbReference>
<dbReference type="PRINTS" id="PR01042">
    <property type="entry name" value="TRNASYNTHASP"/>
</dbReference>
<dbReference type="SUPFAM" id="SSF55681">
    <property type="entry name" value="Class II aaRS and biotin synthetases"/>
    <property type="match status" value="1"/>
</dbReference>
<dbReference type="SUPFAM" id="SSF55261">
    <property type="entry name" value="GAD domain-like"/>
    <property type="match status" value="1"/>
</dbReference>
<dbReference type="SUPFAM" id="SSF50249">
    <property type="entry name" value="Nucleic acid-binding proteins"/>
    <property type="match status" value="1"/>
</dbReference>
<dbReference type="PROSITE" id="PS50862">
    <property type="entry name" value="AA_TRNA_LIGASE_II"/>
    <property type="match status" value="1"/>
</dbReference>
<feature type="chain" id="PRO_0000411605" description="Aspartate--tRNA ligase">
    <location>
        <begin position="1"/>
        <end position="582"/>
    </location>
</feature>
<feature type="region of interest" description="Aspartate" evidence="1">
    <location>
        <begin position="198"/>
        <end position="201"/>
    </location>
</feature>
<feature type="binding site" evidence="1">
    <location>
        <position position="174"/>
    </location>
    <ligand>
        <name>L-aspartate</name>
        <dbReference type="ChEBI" id="CHEBI:29991"/>
    </ligand>
</feature>
<feature type="binding site" evidence="1">
    <location>
        <begin position="220"/>
        <end position="222"/>
    </location>
    <ligand>
        <name>ATP</name>
        <dbReference type="ChEBI" id="CHEBI:30616"/>
    </ligand>
</feature>
<feature type="binding site" evidence="1">
    <location>
        <position position="220"/>
    </location>
    <ligand>
        <name>L-aspartate</name>
        <dbReference type="ChEBI" id="CHEBI:29991"/>
    </ligand>
</feature>
<feature type="binding site" evidence="1">
    <location>
        <position position="229"/>
    </location>
    <ligand>
        <name>ATP</name>
        <dbReference type="ChEBI" id="CHEBI:30616"/>
    </ligand>
</feature>
<feature type="binding site" evidence="1">
    <location>
        <position position="443"/>
    </location>
    <ligand>
        <name>L-aspartate</name>
        <dbReference type="ChEBI" id="CHEBI:29991"/>
    </ligand>
</feature>
<feature type="binding site" evidence="1">
    <location>
        <position position="477"/>
    </location>
    <ligand>
        <name>ATP</name>
        <dbReference type="ChEBI" id="CHEBI:30616"/>
    </ligand>
</feature>
<feature type="binding site" evidence="1">
    <location>
        <position position="484"/>
    </location>
    <ligand>
        <name>L-aspartate</name>
        <dbReference type="ChEBI" id="CHEBI:29991"/>
    </ligand>
</feature>
<feature type="binding site" evidence="1">
    <location>
        <begin position="529"/>
        <end position="532"/>
    </location>
    <ligand>
        <name>ATP</name>
        <dbReference type="ChEBI" id="CHEBI:30616"/>
    </ligand>
</feature>
<protein>
    <recommendedName>
        <fullName evidence="1">Aspartate--tRNA ligase</fullName>
        <ecNumber evidence="1">6.1.1.12</ecNumber>
    </recommendedName>
    <alternativeName>
        <fullName evidence="1">Aspartyl-tRNA synthetase</fullName>
        <shortName evidence="1">AspRS</shortName>
    </alternativeName>
</protein>
<keyword id="KW-0030">Aminoacyl-tRNA synthetase</keyword>
<keyword id="KW-0067">ATP-binding</keyword>
<keyword id="KW-0963">Cytoplasm</keyword>
<keyword id="KW-0436">Ligase</keyword>
<keyword id="KW-0547">Nucleotide-binding</keyword>
<keyword id="KW-0648">Protein biosynthesis</keyword>
<evidence type="ECO:0000255" key="1">
    <source>
        <dbReference type="HAMAP-Rule" id="MF_00044"/>
    </source>
</evidence>
<comment type="function">
    <text evidence="1">Catalyzes the attachment of L-aspartate to tRNA(Asp) in a two-step reaction: L-aspartate is first activated by ATP to form Asp-AMP and then transferred to the acceptor end of tRNA(Asp).</text>
</comment>
<comment type="catalytic activity">
    <reaction evidence="1">
        <text>tRNA(Asp) + L-aspartate + ATP = L-aspartyl-tRNA(Asp) + AMP + diphosphate</text>
        <dbReference type="Rhea" id="RHEA:19649"/>
        <dbReference type="Rhea" id="RHEA-COMP:9660"/>
        <dbReference type="Rhea" id="RHEA-COMP:9678"/>
        <dbReference type="ChEBI" id="CHEBI:29991"/>
        <dbReference type="ChEBI" id="CHEBI:30616"/>
        <dbReference type="ChEBI" id="CHEBI:33019"/>
        <dbReference type="ChEBI" id="CHEBI:78442"/>
        <dbReference type="ChEBI" id="CHEBI:78516"/>
        <dbReference type="ChEBI" id="CHEBI:456215"/>
        <dbReference type="EC" id="6.1.1.12"/>
    </reaction>
</comment>
<comment type="subunit">
    <text evidence="1">Homodimer.</text>
</comment>
<comment type="subcellular location">
    <subcellularLocation>
        <location evidence="1">Cytoplasm</location>
    </subcellularLocation>
</comment>
<comment type="similarity">
    <text evidence="1">Belongs to the class-II aminoacyl-tRNA synthetase family. Type 1 subfamily.</text>
</comment>
<accession>P0DG31</accession>
<accession>Q8K5J0</accession>
<sequence length="582" mass="65993">MKRSMYAGRVREEHIGTTITLKGWVSRRRDLGGLIFIDLRDREGVMQLVINPEEVSSDVMATAERLRSEYVIEVEGFVEARQQANDKLATGMVELKVSALTILNTAKTTPFEIKDDVEVSDDTRLRYRYLDLRRPEMLENFKLRAKVTHSIRNYLDDLEFIDVETPMLTKSTPEGARDYLVPSRVSQGHFYALPQSPQITKQLLMNAGFDRYYQIVKCFRDEDLRGDRQPEFTQVDLETSFLSEQEIQDIVEGMIAKVMKETKEIDVTLPLPRMSYDVAMNSYGSDKPDTRFEMLLQDLTVTVKGIDFKVFSEAPAVKAIVVKGNADRYSRKDIDKLTEFAKQFGAKGLAWVKVTDGQLAGPVAKFLTAIETELSSQLKLAENDLVLFVADTLEVANNTLGALRNRIAKDLDMIDQSQFNFLWVVDWPMFEWSEEEGRYMSAHHPFTLPTPESAHELEGDLAKVRAIAYDIVLNGYELGGGSLRINQKEMQERMFKALGFTADEANDQFGFLLEAMDYGFPPHGGLAIGLDRFVMLLAGKDNIREVIAFPKNNKASDPMTQAPSLVSENQLEELSLQIESHD</sequence>
<name>SYD_STRPQ</name>
<organism>
    <name type="scientific">Streptococcus pyogenes serotype M3 (strain SSI-1)</name>
    <dbReference type="NCBI Taxonomy" id="193567"/>
    <lineage>
        <taxon>Bacteria</taxon>
        <taxon>Bacillati</taxon>
        <taxon>Bacillota</taxon>
        <taxon>Bacilli</taxon>
        <taxon>Lactobacillales</taxon>
        <taxon>Streptococcaceae</taxon>
        <taxon>Streptococcus</taxon>
    </lineage>
</organism>
<reference key="1">
    <citation type="journal article" date="2003" name="Genome Res.">
        <title>Genome sequence of an M3 strain of Streptococcus pyogenes reveals a large-scale genomic rearrangement in invasive strains and new insights into phage evolution.</title>
        <authorList>
            <person name="Nakagawa I."/>
            <person name="Kurokawa K."/>
            <person name="Yamashita A."/>
            <person name="Nakata M."/>
            <person name="Tomiyasu Y."/>
            <person name="Okahashi N."/>
            <person name="Kawabata S."/>
            <person name="Yamazaki K."/>
            <person name="Shiba T."/>
            <person name="Yasunaga T."/>
            <person name="Hayashi H."/>
            <person name="Hattori M."/>
            <person name="Hamada S."/>
        </authorList>
    </citation>
    <scope>NUCLEOTIDE SEQUENCE [LARGE SCALE GENOMIC DNA]</scope>
    <source>
        <strain>SSI-1</strain>
    </source>
</reference>